<sequence length="348" mass="38637">MQLSDFNYELPAALIAQHPLANRTDSRLLEVKADGLNHALLLDRQFKDILSLVKPGDLLVFNNTKVIPARLHGKKETGGIVELLIERISGEKQTWVQIRASKVLKTGSIVHIHNHAGETFSVEIIGYDGRFYEVSFPDNVFSLLERFGELPLPPYIEHQPDGEDAQRYQTVVAKNPGAVAAPTAGLHFDEAILQKIKNLGVNQATVTLHVGAGTFTPVREEDLSKHKMHYEWFSIPNETLQAIEATKENGGRVIAVGTTSLRALESQAASGQSGGETNLFITPGYQFKTVDCLLTNFHLPKSTLLMLVSAFAGMDHIRAAYQHAIEQKYRFFSYGDAMFLCRLENTKP</sequence>
<comment type="function">
    <text evidence="1">Transfers and isomerizes the ribose moiety from AdoMet to the 7-aminomethyl group of 7-deazaguanine (preQ1-tRNA) to give epoxyqueuosine (oQ-tRNA).</text>
</comment>
<comment type="catalytic activity">
    <reaction evidence="1">
        <text>7-aminomethyl-7-carbaguanosine(34) in tRNA + S-adenosyl-L-methionine = epoxyqueuosine(34) in tRNA + adenine + L-methionine + 2 H(+)</text>
        <dbReference type="Rhea" id="RHEA:32155"/>
        <dbReference type="Rhea" id="RHEA-COMP:10342"/>
        <dbReference type="Rhea" id="RHEA-COMP:18582"/>
        <dbReference type="ChEBI" id="CHEBI:15378"/>
        <dbReference type="ChEBI" id="CHEBI:16708"/>
        <dbReference type="ChEBI" id="CHEBI:57844"/>
        <dbReference type="ChEBI" id="CHEBI:59789"/>
        <dbReference type="ChEBI" id="CHEBI:82833"/>
        <dbReference type="ChEBI" id="CHEBI:194443"/>
        <dbReference type="EC" id="2.4.99.17"/>
    </reaction>
</comment>
<comment type="pathway">
    <text evidence="1">tRNA modification; tRNA-queuosine biosynthesis.</text>
</comment>
<comment type="subunit">
    <text evidence="1">Monomer.</text>
</comment>
<comment type="subcellular location">
    <subcellularLocation>
        <location evidence="1">Cytoplasm</location>
    </subcellularLocation>
</comment>
<comment type="similarity">
    <text evidence="1">Belongs to the QueA family.</text>
</comment>
<name>QUEA_POLNS</name>
<proteinExistence type="inferred from homology"/>
<reference key="1">
    <citation type="journal article" date="2013" name="Proc. Natl. Acad. Sci. U.S.A.">
        <title>Polynucleobacter necessarius, a model for genome reduction in both free-living and symbiotic bacteria.</title>
        <authorList>
            <person name="Boscaro V."/>
            <person name="Felletti M."/>
            <person name="Vannini C."/>
            <person name="Ackerman M.S."/>
            <person name="Chain P.S."/>
            <person name="Malfatti S."/>
            <person name="Vergez L.M."/>
            <person name="Shin M."/>
            <person name="Doak T.G."/>
            <person name="Lynch M."/>
            <person name="Petroni G."/>
        </authorList>
    </citation>
    <scope>NUCLEOTIDE SEQUENCE [LARGE SCALE GENOMIC DNA]</scope>
    <source>
        <strain>STIR1</strain>
    </source>
</reference>
<feature type="chain" id="PRO_1000094796" description="S-adenosylmethionine:tRNA ribosyltransferase-isomerase">
    <location>
        <begin position="1"/>
        <end position="348"/>
    </location>
</feature>
<accession>B1XRV8</accession>
<dbReference type="EC" id="2.4.99.17" evidence="1"/>
<dbReference type="EMBL" id="CP001010">
    <property type="protein sequence ID" value="ACB44593.1"/>
    <property type="molecule type" value="Genomic_DNA"/>
</dbReference>
<dbReference type="SMR" id="B1XRV8"/>
<dbReference type="STRING" id="452638.Pnec_1505"/>
<dbReference type="KEGG" id="pne:Pnec_1505"/>
<dbReference type="eggNOG" id="COG0809">
    <property type="taxonomic scope" value="Bacteria"/>
</dbReference>
<dbReference type="HOGENOM" id="CLU_039110_1_0_4"/>
<dbReference type="OrthoDB" id="9805933at2"/>
<dbReference type="UniPathway" id="UPA00392"/>
<dbReference type="GO" id="GO:0005737">
    <property type="term" value="C:cytoplasm"/>
    <property type="evidence" value="ECO:0007669"/>
    <property type="project" value="UniProtKB-SubCell"/>
</dbReference>
<dbReference type="GO" id="GO:0051075">
    <property type="term" value="F:S-adenosylmethionine:tRNA ribosyltransferase-isomerase activity"/>
    <property type="evidence" value="ECO:0007669"/>
    <property type="project" value="UniProtKB-EC"/>
</dbReference>
<dbReference type="GO" id="GO:0008616">
    <property type="term" value="P:queuosine biosynthetic process"/>
    <property type="evidence" value="ECO:0007669"/>
    <property type="project" value="UniProtKB-UniRule"/>
</dbReference>
<dbReference type="GO" id="GO:0002099">
    <property type="term" value="P:tRNA wobble guanine modification"/>
    <property type="evidence" value="ECO:0007669"/>
    <property type="project" value="TreeGrafter"/>
</dbReference>
<dbReference type="FunFam" id="3.40.1780.10:FF:000001">
    <property type="entry name" value="S-adenosylmethionine:tRNA ribosyltransferase-isomerase"/>
    <property type="match status" value="1"/>
</dbReference>
<dbReference type="Gene3D" id="2.40.10.240">
    <property type="entry name" value="QueA-like"/>
    <property type="match status" value="1"/>
</dbReference>
<dbReference type="Gene3D" id="3.40.1780.10">
    <property type="entry name" value="QueA-like"/>
    <property type="match status" value="1"/>
</dbReference>
<dbReference type="HAMAP" id="MF_00113">
    <property type="entry name" value="QueA"/>
    <property type="match status" value="1"/>
</dbReference>
<dbReference type="InterPro" id="IPR003699">
    <property type="entry name" value="QueA"/>
</dbReference>
<dbReference type="InterPro" id="IPR042118">
    <property type="entry name" value="QueA_dom1"/>
</dbReference>
<dbReference type="InterPro" id="IPR042119">
    <property type="entry name" value="QueA_dom2"/>
</dbReference>
<dbReference type="InterPro" id="IPR036100">
    <property type="entry name" value="QueA_sf"/>
</dbReference>
<dbReference type="NCBIfam" id="NF001140">
    <property type="entry name" value="PRK00147.1"/>
    <property type="match status" value="1"/>
</dbReference>
<dbReference type="NCBIfam" id="TIGR00113">
    <property type="entry name" value="queA"/>
    <property type="match status" value="1"/>
</dbReference>
<dbReference type="PANTHER" id="PTHR30307">
    <property type="entry name" value="S-ADENOSYLMETHIONINE:TRNA RIBOSYLTRANSFERASE-ISOMERASE"/>
    <property type="match status" value="1"/>
</dbReference>
<dbReference type="PANTHER" id="PTHR30307:SF0">
    <property type="entry name" value="S-ADENOSYLMETHIONINE:TRNA RIBOSYLTRANSFERASE-ISOMERASE"/>
    <property type="match status" value="1"/>
</dbReference>
<dbReference type="Pfam" id="PF02547">
    <property type="entry name" value="Queuosine_synth"/>
    <property type="match status" value="1"/>
</dbReference>
<dbReference type="SUPFAM" id="SSF111337">
    <property type="entry name" value="QueA-like"/>
    <property type="match status" value="1"/>
</dbReference>
<gene>
    <name evidence="1" type="primary">queA</name>
    <name type="ordered locus">Pnec_1505</name>
</gene>
<protein>
    <recommendedName>
        <fullName evidence="1">S-adenosylmethionine:tRNA ribosyltransferase-isomerase</fullName>
        <ecNumber evidence="1">2.4.99.17</ecNumber>
    </recommendedName>
    <alternativeName>
        <fullName evidence="1">Queuosine biosynthesis protein QueA</fullName>
    </alternativeName>
</protein>
<evidence type="ECO:0000255" key="1">
    <source>
        <dbReference type="HAMAP-Rule" id="MF_00113"/>
    </source>
</evidence>
<organism>
    <name type="scientific">Polynucleobacter necessarius subsp. necessarius (strain STIR1)</name>
    <dbReference type="NCBI Taxonomy" id="452638"/>
    <lineage>
        <taxon>Bacteria</taxon>
        <taxon>Pseudomonadati</taxon>
        <taxon>Pseudomonadota</taxon>
        <taxon>Betaproteobacteria</taxon>
        <taxon>Burkholderiales</taxon>
        <taxon>Burkholderiaceae</taxon>
        <taxon>Polynucleobacter</taxon>
    </lineage>
</organism>
<keyword id="KW-0963">Cytoplasm</keyword>
<keyword id="KW-0671">Queuosine biosynthesis</keyword>
<keyword id="KW-0949">S-adenosyl-L-methionine</keyword>
<keyword id="KW-0808">Transferase</keyword>